<feature type="chain" id="PRO_0000449826" description="L-aspartate semialdehyde sulfurtransferase iron-sulfur subunit">
    <location>
        <begin position="1"/>
        <end position="130"/>
    </location>
</feature>
<feature type="domain" description="4Fe-4S ferredoxin-type 1" evidence="1">
    <location>
        <begin position="72"/>
        <end position="101"/>
    </location>
</feature>
<feature type="domain" description="4Fe-4S ferredoxin-type 2" evidence="1">
    <location>
        <begin position="102"/>
        <end position="130"/>
    </location>
</feature>
<feature type="binding site" evidence="1">
    <location>
        <position position="81"/>
    </location>
    <ligand>
        <name>[4Fe-4S] cluster</name>
        <dbReference type="ChEBI" id="CHEBI:49883"/>
        <label>1</label>
    </ligand>
</feature>
<feature type="binding site" evidence="1">
    <location>
        <position position="84"/>
    </location>
    <ligand>
        <name>[4Fe-4S] cluster</name>
        <dbReference type="ChEBI" id="CHEBI:49883"/>
        <label>1</label>
    </ligand>
</feature>
<feature type="binding site" evidence="1">
    <location>
        <position position="87"/>
    </location>
    <ligand>
        <name>[4Fe-4S] cluster</name>
        <dbReference type="ChEBI" id="CHEBI:49883"/>
        <label>1</label>
    </ligand>
</feature>
<feature type="binding site" evidence="1">
    <location>
        <position position="91"/>
    </location>
    <ligand>
        <name>[4Fe-4S] cluster</name>
        <dbReference type="ChEBI" id="CHEBI:49883"/>
        <label>2</label>
    </ligand>
</feature>
<feature type="binding site" evidence="1">
    <location>
        <position position="111"/>
    </location>
    <ligand>
        <name>[4Fe-4S] cluster</name>
        <dbReference type="ChEBI" id="CHEBI:49883"/>
        <label>2</label>
    </ligand>
</feature>
<feature type="binding site" evidence="1">
    <location>
        <position position="114"/>
    </location>
    <ligand>
        <name>[4Fe-4S] cluster</name>
        <dbReference type="ChEBI" id="CHEBI:49883"/>
        <label>2</label>
    </ligand>
</feature>
<feature type="binding site" evidence="1">
    <location>
        <position position="117"/>
    </location>
    <ligand>
        <name>[4Fe-4S] cluster</name>
        <dbReference type="ChEBI" id="CHEBI:49883"/>
        <label>2</label>
    </ligand>
</feature>
<feature type="binding site" evidence="1">
    <location>
        <position position="121"/>
    </location>
    <ligand>
        <name>[4Fe-4S] cluster</name>
        <dbReference type="ChEBI" id="CHEBI:49883"/>
        <label>1</label>
    </ligand>
</feature>
<dbReference type="EMBL" id="AE010299">
    <property type="protein sequence ID" value="AAM05228.1"/>
    <property type="molecule type" value="Genomic_DNA"/>
</dbReference>
<dbReference type="FunCoup" id="Q8TPT3">
    <property type="interactions" value="13"/>
</dbReference>
<dbReference type="STRING" id="188937.MA_1822"/>
<dbReference type="EnsemblBacteria" id="AAM05228">
    <property type="protein sequence ID" value="AAM05228"/>
    <property type="gene ID" value="MA_1822"/>
</dbReference>
<dbReference type="KEGG" id="mac:MA_1822"/>
<dbReference type="HOGENOM" id="CLU_152999_0_0_2"/>
<dbReference type="InParanoid" id="Q8TPT3"/>
<dbReference type="PhylomeDB" id="Q8TPT3"/>
<dbReference type="Proteomes" id="UP000002487">
    <property type="component" value="Chromosome"/>
</dbReference>
<dbReference type="GO" id="GO:0051539">
    <property type="term" value="F:4 iron, 4 sulfur cluster binding"/>
    <property type="evidence" value="ECO:0007669"/>
    <property type="project" value="UniProtKB-KW"/>
</dbReference>
<dbReference type="GO" id="GO:0046872">
    <property type="term" value="F:metal ion binding"/>
    <property type="evidence" value="ECO:0007669"/>
    <property type="project" value="UniProtKB-KW"/>
</dbReference>
<dbReference type="GO" id="GO:0016491">
    <property type="term" value="F:oxidoreductase activity"/>
    <property type="evidence" value="ECO:0007669"/>
    <property type="project" value="UniProtKB-ARBA"/>
</dbReference>
<dbReference type="GO" id="GO:0009086">
    <property type="term" value="P:methionine biosynthetic process"/>
    <property type="evidence" value="ECO:0007669"/>
    <property type="project" value="UniProtKB-KW"/>
</dbReference>
<dbReference type="Gene3D" id="3.30.70.20">
    <property type="match status" value="2"/>
</dbReference>
<dbReference type="InterPro" id="IPR017896">
    <property type="entry name" value="4Fe4S_Fe-S-bd"/>
</dbReference>
<dbReference type="InterPro" id="IPR017900">
    <property type="entry name" value="4Fe4S_Fe_S_CS"/>
</dbReference>
<dbReference type="InterPro" id="IPR045865">
    <property type="entry name" value="ACT-like_dom_sf"/>
</dbReference>
<dbReference type="InterPro" id="IPR050572">
    <property type="entry name" value="Fe-S_Ferredoxin"/>
</dbReference>
<dbReference type="InterPro" id="IPR018449">
    <property type="entry name" value="NIL_domain"/>
</dbReference>
<dbReference type="PANTHER" id="PTHR43687">
    <property type="entry name" value="ADENYLYLSULFATE REDUCTASE, BETA SUBUNIT"/>
    <property type="match status" value="1"/>
</dbReference>
<dbReference type="PANTHER" id="PTHR43687:SF6">
    <property type="entry name" value="L-ASPARTATE SEMIALDEHYDE SULFURTRANSFERASE IRON-SULFUR SUBUNIT"/>
    <property type="match status" value="1"/>
</dbReference>
<dbReference type="Pfam" id="PF12838">
    <property type="entry name" value="Fer4_7"/>
    <property type="match status" value="1"/>
</dbReference>
<dbReference type="Pfam" id="PF09383">
    <property type="entry name" value="NIL"/>
    <property type="match status" value="1"/>
</dbReference>
<dbReference type="SMART" id="SM00930">
    <property type="entry name" value="NIL"/>
    <property type="match status" value="1"/>
</dbReference>
<dbReference type="SUPFAM" id="SSF54862">
    <property type="entry name" value="4Fe-4S ferredoxins"/>
    <property type="match status" value="1"/>
</dbReference>
<dbReference type="SUPFAM" id="SSF55021">
    <property type="entry name" value="ACT-like"/>
    <property type="match status" value="1"/>
</dbReference>
<dbReference type="PROSITE" id="PS00198">
    <property type="entry name" value="4FE4S_FER_1"/>
    <property type="match status" value="2"/>
</dbReference>
<dbReference type="PROSITE" id="PS51379">
    <property type="entry name" value="4FE4S_FER_2"/>
    <property type="match status" value="2"/>
</dbReference>
<reference key="1">
    <citation type="journal article" date="2002" name="Genome Res.">
        <title>The genome of Methanosarcina acetivorans reveals extensive metabolic and physiological diversity.</title>
        <authorList>
            <person name="Galagan J.E."/>
            <person name="Nusbaum C."/>
            <person name="Roy A."/>
            <person name="Endrizzi M.G."/>
            <person name="Macdonald P."/>
            <person name="FitzHugh W."/>
            <person name="Calvo S."/>
            <person name="Engels R."/>
            <person name="Smirnov S."/>
            <person name="Atnoor D."/>
            <person name="Brown A."/>
            <person name="Allen N."/>
            <person name="Naylor J."/>
            <person name="Stange-Thomann N."/>
            <person name="DeArellano K."/>
            <person name="Johnson R."/>
            <person name="Linton L."/>
            <person name="McEwan P."/>
            <person name="McKernan K."/>
            <person name="Talamas J."/>
            <person name="Tirrell A."/>
            <person name="Ye W."/>
            <person name="Zimmer A."/>
            <person name="Barber R.D."/>
            <person name="Cann I."/>
            <person name="Graham D.E."/>
            <person name="Grahame D.A."/>
            <person name="Guss A.M."/>
            <person name="Hedderich R."/>
            <person name="Ingram-Smith C."/>
            <person name="Kuettner H.C."/>
            <person name="Krzycki J.A."/>
            <person name="Leigh J.A."/>
            <person name="Li W."/>
            <person name="Liu J."/>
            <person name="Mukhopadhyay B."/>
            <person name="Reeve J.N."/>
            <person name="Smith K."/>
            <person name="Springer T.A."/>
            <person name="Umayam L.A."/>
            <person name="White O."/>
            <person name="White R.H."/>
            <person name="de Macario E.C."/>
            <person name="Ferry J.G."/>
            <person name="Jarrell K.F."/>
            <person name="Jing H."/>
            <person name="Macario A.J.L."/>
            <person name="Paulsen I.T."/>
            <person name="Pritchett M."/>
            <person name="Sowers K.R."/>
            <person name="Swanson R.V."/>
            <person name="Zinder S.H."/>
            <person name="Lander E."/>
            <person name="Metcalf W.W."/>
            <person name="Birren B."/>
        </authorList>
    </citation>
    <scope>NUCLEOTIDE SEQUENCE [LARGE SCALE GENOMIC DNA]</scope>
    <source>
        <strain>ATCC 35395 / DSM 2834 / JCM 12185 / C2A</strain>
    </source>
</reference>
<reference key="2">
    <citation type="journal article" date="2014" name="Mol. Microbiol.">
        <title>Novel proteins for homocysteine biosynthesis in anaerobic microorganisms.</title>
        <authorList>
            <person name="Rauch B.J."/>
            <person name="Gustafson A."/>
            <person name="Perona J.J."/>
        </authorList>
    </citation>
    <scope>FUNCTION</scope>
</reference>
<reference key="3">
    <citation type="journal article" date="2015" name="Biochemistry">
        <title>Homocysteine is biosynthesized from aspartate semialdehyde and hydrogen sulfide in methanogenic archaea.</title>
        <authorList>
            <person name="Allen K.D."/>
            <person name="Miller D.V."/>
            <person name="Rauch B.J."/>
            <person name="Perona J.J."/>
            <person name="White R.H."/>
        </authorList>
    </citation>
    <scope>FUNCTION</scope>
    <scope>PATHWAY</scope>
</reference>
<reference key="4">
    <citation type="journal article" date="2017" name="Biochemistry">
        <title>Persulfide formation mediates cysteine and homocysteine biosynthesis in Methanosarcina acetivorans.</title>
        <authorList>
            <person name="Rauch B.J."/>
            <person name="Klimek J."/>
            <person name="David L."/>
            <person name="Perona J.J."/>
        </authorList>
    </citation>
    <scope>SUBUNIT</scope>
</reference>
<comment type="function">
    <text evidence="2 3 6">Required for O-acetylhomoserine sulfhydrylase (OAHS)-independent homocysteine (Hcy) biosynthesis (PubMed:25315403, PubMed:25938369). Together with MA_1821, catalyzes the condensation of sulfide with aspartate semialdehyde to generate homocysteine. May be involved in the reduction of the disulfide formed in MA_1821 (Probable).</text>
</comment>
<comment type="cofactor">
    <cofactor evidence="1">
        <name>[4Fe-4S] cluster</name>
        <dbReference type="ChEBI" id="CHEBI:49883"/>
    </cofactor>
    <text evidence="1">Binds 2 [4Fe-4S] cluster.</text>
</comment>
<comment type="pathway">
    <text evidence="6">Amino-acid biosynthesis.</text>
</comment>
<comment type="subunit">
    <text evidence="4">May form a complex with MA_1821.</text>
</comment>
<sequence length="130" mass="14467">MSMKIKICIPTERIQNPIISETIVETGILLNIMVANIDSTYGELIADVKDSRFARIKKALESRGAIVAILDRPIHRDEEECVECGACISVCPMNVYSFDETWSLCVDEKKCIQCGMCIKMCPHGALKLGE</sequence>
<gene>
    <name evidence="7" type="ordered locus">MA_1822</name>
</gene>
<organism>
    <name type="scientific">Methanosarcina acetivorans (strain ATCC 35395 / DSM 2834 / JCM 12185 / C2A)</name>
    <dbReference type="NCBI Taxonomy" id="188937"/>
    <lineage>
        <taxon>Archaea</taxon>
        <taxon>Methanobacteriati</taxon>
        <taxon>Methanobacteriota</taxon>
        <taxon>Stenosarchaea group</taxon>
        <taxon>Methanomicrobia</taxon>
        <taxon>Methanosarcinales</taxon>
        <taxon>Methanosarcinaceae</taxon>
        <taxon>Methanosarcina</taxon>
    </lineage>
</organism>
<name>ASSTI_METAC</name>
<evidence type="ECO:0000255" key="1">
    <source>
        <dbReference type="PROSITE-ProRule" id="PRU00711"/>
    </source>
</evidence>
<evidence type="ECO:0000269" key="2">
    <source>
    </source>
</evidence>
<evidence type="ECO:0000269" key="3">
    <source>
    </source>
</evidence>
<evidence type="ECO:0000269" key="4">
    <source>
    </source>
</evidence>
<evidence type="ECO:0000305" key="5"/>
<evidence type="ECO:0000305" key="6">
    <source>
    </source>
</evidence>
<evidence type="ECO:0000312" key="7">
    <source>
        <dbReference type="EMBL" id="AAM05228.1"/>
    </source>
</evidence>
<protein>
    <recommendedName>
        <fullName evidence="5">L-aspartate semialdehyde sulfurtransferase iron-sulfur subunit</fullName>
    </recommendedName>
</protein>
<accession>Q8TPT3</accession>
<keyword id="KW-0004">4Fe-4S</keyword>
<keyword id="KW-0028">Amino-acid biosynthesis</keyword>
<keyword id="KW-0249">Electron transport</keyword>
<keyword id="KW-0408">Iron</keyword>
<keyword id="KW-0411">Iron-sulfur</keyword>
<keyword id="KW-0479">Metal-binding</keyword>
<keyword id="KW-0486">Methionine biosynthesis</keyword>
<keyword id="KW-1185">Reference proteome</keyword>
<keyword id="KW-0677">Repeat</keyword>
<keyword id="KW-0813">Transport</keyword>
<proteinExistence type="evidence at protein level"/>